<evidence type="ECO:0000255" key="1"/>
<evidence type="ECO:0000305" key="2"/>
<keyword id="KW-0067">ATP-binding</keyword>
<keyword id="KW-0963">Cytoplasm</keyword>
<keyword id="KW-1029">Fimbrium biogenesis</keyword>
<keyword id="KW-0547">Nucleotide-binding</keyword>
<keyword id="KW-0813">Transport</keyword>
<name>PILT_NEIGO</name>
<sequence>MRSSDCGAVLAWSVKMHRWPVWASCIAYSILSLLRTSPIQTTSGDWAIAFCTPMIRVHGDMRRINLPEMSAEEVGNMVTSVMNDHQRKIYQQNLEVDFSFELPNVARFRVNAFNTGRGPAAVFRTIPSTVLSLEELKAPSIFQKIAESPRGMVLVTGPTGSGKSTTLAAMINYINETQPAHILTIEDPIEFVHQSKKSLINQRELHQHTLSFANALSSALREDPDVILVGEMRDPETIGLALTAAETGHLVFGTLHTTGAAKTVDRIVDVFPAGEKEMVRSMLSESLTAVISQNLLKTHDGNGRVASHEILIANPAVRNLIRENKITQINSVLQTGQASGMQTMDQSLQSLVRQGLIAPEAARRRAQNSESMSF</sequence>
<reference key="1">
    <citation type="journal article" date="1993" name="Mol. Microbiol.">
        <title>Conservation of genes encoding components of a type IV pilus assembly/two-step protein export pathway in Neisseria gonorrhoeae.</title>
        <authorList>
            <person name="Lauer P."/>
            <person name="Albertson N.H."/>
            <person name="Koomey M."/>
        </authorList>
    </citation>
    <scope>NUCLEOTIDE SEQUENCE [GENOMIC DNA]</scope>
    <source>
        <strain>MS11</strain>
    </source>
</reference>
<organism>
    <name type="scientific">Neisseria gonorrhoeae</name>
    <dbReference type="NCBI Taxonomy" id="485"/>
    <lineage>
        <taxon>Bacteria</taxon>
        <taxon>Pseudomonadati</taxon>
        <taxon>Pseudomonadota</taxon>
        <taxon>Betaproteobacteria</taxon>
        <taxon>Neisseriales</taxon>
        <taxon>Neisseriaceae</taxon>
        <taxon>Neisseria</taxon>
    </lineage>
</organism>
<feature type="chain" id="PRO_0000207295" description="Twitching motility protein">
    <location>
        <begin position="1"/>
        <end position="374"/>
    </location>
</feature>
<feature type="binding site" evidence="1">
    <location>
        <begin position="157"/>
        <end position="164"/>
    </location>
    <ligand>
        <name>ATP</name>
        <dbReference type="ChEBI" id="CHEBI:30616"/>
    </ligand>
</feature>
<comment type="function">
    <text>May be involved in pilus retraction.</text>
</comment>
<comment type="subcellular location">
    <subcellularLocation>
        <location evidence="2">Cytoplasm</location>
    </subcellularLocation>
</comment>
<comment type="similarity">
    <text evidence="2">Belongs to the GSP E family.</text>
</comment>
<proteinExistence type="inferred from homology"/>
<gene>
    <name type="primary">pilT</name>
</gene>
<dbReference type="EMBL" id="L11719">
    <property type="protein sequence ID" value="AAA25499.1"/>
    <property type="molecule type" value="Genomic_DNA"/>
</dbReference>
<dbReference type="PIR" id="S32916">
    <property type="entry name" value="S32916"/>
</dbReference>
<dbReference type="SMR" id="Q06581"/>
<dbReference type="GO" id="GO:0005737">
    <property type="term" value="C:cytoplasm"/>
    <property type="evidence" value="ECO:0007669"/>
    <property type="project" value="UniProtKB-SubCell"/>
</dbReference>
<dbReference type="GO" id="GO:0005524">
    <property type="term" value="F:ATP binding"/>
    <property type="evidence" value="ECO:0007669"/>
    <property type="project" value="UniProtKB-KW"/>
</dbReference>
<dbReference type="GO" id="GO:0016887">
    <property type="term" value="F:ATP hydrolysis activity"/>
    <property type="evidence" value="ECO:0007669"/>
    <property type="project" value="InterPro"/>
</dbReference>
<dbReference type="CDD" id="cd01131">
    <property type="entry name" value="PilT"/>
    <property type="match status" value="1"/>
</dbReference>
<dbReference type="FunFam" id="3.40.50.300:FF:000872">
    <property type="entry name" value="Twitching motility protein PilT"/>
    <property type="match status" value="1"/>
</dbReference>
<dbReference type="Gene3D" id="3.30.450.90">
    <property type="match status" value="1"/>
</dbReference>
<dbReference type="Gene3D" id="3.40.50.300">
    <property type="entry name" value="P-loop containing nucleotide triphosphate hydrolases"/>
    <property type="match status" value="1"/>
</dbReference>
<dbReference type="InterPro" id="IPR003593">
    <property type="entry name" value="AAA+_ATPase"/>
</dbReference>
<dbReference type="InterPro" id="IPR027417">
    <property type="entry name" value="P-loop_NTPase"/>
</dbReference>
<dbReference type="InterPro" id="IPR006321">
    <property type="entry name" value="PilT/PilU"/>
</dbReference>
<dbReference type="InterPro" id="IPR001482">
    <property type="entry name" value="T2SS/T4SS_dom"/>
</dbReference>
<dbReference type="InterPro" id="IPR050921">
    <property type="entry name" value="T4SS_GSP_E_ATPase"/>
</dbReference>
<dbReference type="NCBIfam" id="TIGR01420">
    <property type="entry name" value="pilT_fam"/>
    <property type="match status" value="1"/>
</dbReference>
<dbReference type="PANTHER" id="PTHR30486">
    <property type="entry name" value="TWITCHING MOTILITY PROTEIN PILT"/>
    <property type="match status" value="1"/>
</dbReference>
<dbReference type="PANTHER" id="PTHR30486:SF6">
    <property type="entry name" value="TYPE IV PILUS RETRACTATION ATPASE PILT"/>
    <property type="match status" value="1"/>
</dbReference>
<dbReference type="Pfam" id="PF00437">
    <property type="entry name" value="T2SSE"/>
    <property type="match status" value="1"/>
</dbReference>
<dbReference type="SMART" id="SM00382">
    <property type="entry name" value="AAA"/>
    <property type="match status" value="1"/>
</dbReference>
<dbReference type="SUPFAM" id="SSF52540">
    <property type="entry name" value="P-loop containing nucleoside triphosphate hydrolases"/>
    <property type="match status" value="1"/>
</dbReference>
<dbReference type="PROSITE" id="PS00662">
    <property type="entry name" value="T2SP_E"/>
    <property type="match status" value="1"/>
</dbReference>
<protein>
    <recommendedName>
        <fullName>Twitching motility protein</fullName>
    </recommendedName>
</protein>
<accession>Q06581</accession>